<proteinExistence type="evidence at protein level"/>
<organismHost>
    <name type="scientific">Ectropis obliqua</name>
    <name type="common">Tea geometrid moth</name>
    <dbReference type="NCBI Taxonomy" id="248899"/>
</organismHost>
<keyword id="KW-0067">ATP-binding</keyword>
<keyword id="KW-0167">Capsid protein</keyword>
<keyword id="KW-0175">Coiled coil</keyword>
<keyword id="KW-0903">Direct protein sequencing</keyword>
<keyword id="KW-0347">Helicase</keyword>
<keyword id="KW-0378">Hydrolase</keyword>
<keyword id="KW-0547">Nucleotide-binding</keyword>
<keyword id="KW-0548">Nucleotidyltransferase</keyword>
<keyword id="KW-0645">Protease</keyword>
<keyword id="KW-0696">RNA-directed RNA polymerase</keyword>
<keyword id="KW-0788">Thiol protease</keyword>
<keyword id="KW-0808">Transferase</keyword>
<keyword id="KW-0693">Viral RNA replication</keyword>
<keyword id="KW-0946">Virion</keyword>
<reference key="1">
    <citation type="journal article" date="2004" name="J. Gen. Virol.">
        <title>Sequence analysis and genomic organization of a new insect picorna-like virus, Ectropis obliqua picorna-like virus, isolated from Ectropis obliqua.</title>
        <authorList>
            <person name="Wang X."/>
            <person name="Zhang J."/>
            <person name="Lu J."/>
            <person name="Yi F."/>
            <person name="Liu C."/>
            <person name="Hu Y."/>
        </authorList>
    </citation>
    <scope>NUCLEOTIDE SEQUENCE [GENOMIC RNA]</scope>
</reference>
<reference key="2">
    <citation type="journal article" date="2008" name="J. Gen. Virol.">
        <title>Occurrence, function and evolutionary origins of '2A-like' sequences in virus genomes.</title>
        <authorList>
            <person name="Luke G.A."/>
            <person name="de Felipe P."/>
            <person name="Lukashev A."/>
            <person name="Kallioinen S.E."/>
            <person name="Bruno E.A."/>
            <person name="Ryan M.D."/>
        </authorList>
    </citation>
    <scope>IDENTIFICATION (PROTEIN 2A-LIKE 1)</scope>
    <scope>IDENTIFICATION (PROTEIN 2A-LIKE 2)</scope>
</reference>
<reference key="3">
    <citation type="journal article" date="2010" name="BMB Rep.">
        <title>Expression and characterization of RNA-dependent RNA polymerase of Ectropis obliqua virus.</title>
        <authorList>
            <person name="Lin M."/>
            <person name="Ye S."/>
            <person name="Xiong Y."/>
            <person name="Cai D."/>
            <person name="Zhang J."/>
            <person name="Hu Y."/>
        </authorList>
    </citation>
    <scope>FUNCTION (RNA-DIRECTED RNA POLYMERASE)</scope>
    <scope>CATALYTIC ACTIVITY (RNA-DIRECTED RNA POLYMERASE)</scope>
</reference>
<reference key="4">
    <citation type="journal article" date="2012" name="Virology">
        <title>Identification and characterization of Iflavirus 3C-like protease processing activities.</title>
        <authorList>
            <person name="Ye S."/>
            <person name="Xia H."/>
            <person name="Dong C."/>
            <person name="Cheng Z."/>
            <person name="Xia X."/>
            <person name="Zhang J."/>
            <person name="Zhou X."/>
            <person name="Hu Y."/>
        </authorList>
    </citation>
    <scope>PROTEIN SEQUENCE OF 2194-2197 AND 2493-2496</scope>
    <scope>FUNCTION (3C-LIKE PROTEASE)</scope>
    <scope>ACTIVE SITE (3C-LIKE PROTEASE)</scope>
    <scope>PROTEOLYTIC CLEAVAGE (GENOME POLYPROTEIN)</scope>
    <scope>CHARACTERIZATION (3C-LIKE PROTEASE)</scope>
    <scope>CATALYTIC ACTIVITY (3C-LIKE PROTEASE)</scope>
    <scope>MUTAGENESIS OF HIS-2261; ASP-2299 AND CYS-2383</scope>
    <scope>BIOPHYSICOCHEMICAL PROPERTIES (3C-LIKE PROTEASE)</scope>
    <scope>ACTIVITY REGULATION (3C-LIKE PROTEASE)</scope>
</reference>
<reference key="5">
    <citation type="journal article" date="2013" name="J. Virol.">
        <title>The nonstructural protein 2C of a Picorna-like virus displays nucleic acid helix destabilizing activity that can be functionally separated from its ATPase activity.</title>
        <authorList>
            <person name="Cheng Z."/>
            <person name="Yang J."/>
            <person name="Xia H."/>
            <person name="Qiu Y."/>
            <person name="Wang Z."/>
            <person name="Han Y."/>
            <person name="Xia X."/>
            <person name="Qin C.F."/>
            <person name="Hu Y."/>
            <person name="Zhou X."/>
        </authorList>
    </citation>
    <scope>FUNCTION (HELICASE)</scope>
    <scope>CATALYTIC ACTIVITY (HELICASE)</scope>
</reference>
<sequence length="2987" mass="332444">MMTTQTNQLFNRSLNDELGNRTDTITLHPWNVSEYVTSTGLAEAEFEACTGKDLEIQKYLVTVSEECPCGHPTTFSEIDMSRGMVMASSDNIYSDDIVTLVPTENGYEDSDPCFCENQKEDCDNCMYLQILRMAPGKWNMTYGLRHNHQAQLTYYLTEERGFTCEGYTLEADTSDSEGFGDTADYTLYCIQYSGKYKQRRQWHVLLDDESCGFCKYRVTTGLIVPEVPRHWTNELGRRQNLLVPKVLGQYVDFIEAKSPLRLDWLSMSKLVSGKCSLPNFYVNLTTLRTFQVAGGKFLPYLYNGSAANNDLKLPIQVTAQGDEDTPAGELSIEQDTHENTTLAESTDASTAYVATEEFSMMPWITDGPHTYPDLTERWTKAFQFQWTTSQAQGEIIQRFDLPIEAIQNFINSPNALPWRQHAFYKSDIELKVQVNSQPGQSGYLILGAMYEASEGTAIGNRVDHAANIVAMPHMRISAGSSNSGDMVIPFIRHFPVGCILNNAFDVPQYFVTLFVAPLLQLRTGADGPQVVDVTIMIRFPNCEFYGQRTTEQIVTAQGWAPDLTQDGDVESNPGPFLSGLLGTVAAVGKTVAGAGSSIGSIATGVSGVANGIGSIGSAAGKVIGGVESLLRPLFPKKDMDRPQNIIEPTNFYLQQNTSLSLATGTNNVKLLQLQAENSVSHPPGFVPVDDQFNNRFILSVFGLSDYFQWFSGSASGTLLYSFDVTPLKSFTRGIPLQPEFYLTPMAALSGQYGGYHGDMEMRLTFAVSKFHSGRVFIVYSPDVVPTFDNIGAYYNVLLDVQDQSVYTFKIPYQVPTPYAPIFESLQGDTGTFLTPAVSAGNVRCMAYGFVSIFVENQLRVMQTAAPTIDVLVELRGADNFHLVLPAGGKFRSLSTITTTEAPVVTAMGDERREPHTVNPPPRRIMPVWAAQLNESYDCRDVVKRYHDWFDIVSPAVVAGRGFTDMYMNVTVFHVPVPAFDAAPIQNVQFTDMLVGSSILNKSMVLARERINLATNNTISIRVPWTNYASMISNSINPASGRSNTMAPYSNGRVVVYIEYLSSYTTTLGAFRVVWDVTAGSASTRPDTYTPDMLTLLHDGFRFAKGDFNYQMDFTPVPSGANTAIRMRCFRAYGDGGNLYVFQGFPKMLGTYTPRQAISGVTPTRGGLQRQNIIGGGQRDLTQDGDIESNPGPTQSKPTGAQPPPDDILTDEDREGLEGGSIRISFFEKLGDYCKRALGWSGERIVEFIRELRSIKKHVGSIPGMTRISELITTIKELSVVTNGLNRMSAAVEELNEQIKKTREKVETFVGGVGGKLNSLDTGDLVSNGIEYVAYILNIYNSKSVGMTLINVAALLSKMGLGRYLVNDLVDRLGTFAKGEDTEEIEREYTSLIITGVLGAFGLGTMNVEKEGFVKPFLSNVKDFFRNGFAVKKFLDSHFKCINDICGWVRSKIFGKVDKGGLTVDLLVWCERVQVLAEVYNYDTILNDPEFAETLLSLQDEAFEFDRLFIASRIRPPNQYSMYRTKLQRAIDLLGQQGTMQKSKPVPFCLWVYGHSGCGKSHVCDNVLTEIGSALGINTANPIYTRSPDVEFWNGYTGQKLISWQDFAKITTGETYRKQVSELSSLIEPTPFNPPFAALEDKRKIADAWAVYVSSNKAFPEVQNMGMEDSALFYRRRHALVKMRINPEIIQEYARREPPISLEDKYKGQTVYYPSNIPSEDFATRGPYFHVQFAFHVTSLSTAEPTEWLGYDGFIAEVTRRAIDHRQREVDACIQRRGIYSKLRRSAPTGVEFREEVRTLKEELDRLTQERVAEAHGSDNAVKNLATTMDYEKRATFEETEALGSVILQYRLDPNCDCTNQAIMKAATSNEPRKICEVSFCEKCEPVNQRKKNVYKAMSEQLEGVAVSNPFGGIAMIERGDSARIPRAGRQYTPLDYARQATIGTLKWIQGKGLPAGYAYWSEIMPVCCHKKEILELAYFENVGDNIELVLDLSSMKARHGVSFPLFHKLEWFDLRKLDAWATTGFKVILPVVCEQSKFNWNNCIEVKPGERGRIPITPKWAPELIGRVTLEEFKRSWSCDAVQKPSVSYYKIEKDLIRFLVSGTYVQIEGVENMTAGLNHLMSLHTKDTVAFCNSFFYWKSGGKLRAAKFYPFVNGMLKDMSFIFSNIMIAVGAVMLAYKVYRLIRNSSECVEAQAKDYDQKTEAPKIPKVNFVQSTPVVVAAKGDEELSIIHNSLCQLRKGSMRLLGVRLCSNFVLAPQHLAWVPGEFGISLHSSGAWSTELIFEATSVKYSCVKGFDYAVYRFVTLPAGRNIVNYFTTRAQGATLKSEATLMTLSGASLQLRPVRISQYTGALTYDNASFPGTGTSMIGWQYWLGAQSVRCGSLIMSNNLLCGFHVAQNLKTGDAYAVSICKEMLVEALRILGATPFDMKMKRTTPITTVGEPKMQPPETAVVIPLGKAIEPVRYSGKSNLEKSIMHGELAEPFRIPAAQSATAKGECIGYDIVMKGCEKQFKPPKPIDPEEVEKIGDYLIERLVPQSIPLIPTISEPLSLGEAIAGIDGIPLMCGMKLNTSIGWPLCNEYPKGTKKSNIIRVDREEGEVHVDVVAFDDYAKANTLRKQAILPPTTFMDFPKDELLKPGKDTRLINGAPLHHTLDMRRYLMEFFAAITTINNKIAVGIDVHSGDWALIHGGADDVVDEDYSGFGPGFHSQWLTVVCPIAVAWCKHHKKVDKEYEDVVNCLIMELQNAYHVAGDLVYQVLCGSPSGAFATDRINSLANLCYHCLCHLRKYGTLTGFWSHYTLVYGDDTRRRETAYTGDEFQECMASVGIVVNRDKSGVTSFLKRQFIPIDHRDVRVMLAPLPRPIVEDILNWVRKPYASKLSALEETVGSYLSEIFHHGQDEFNNSRSKIQAILARHGSHPELPTFDDLFRQKYLSNGVWPVLMPLANALGPIPAAESEPTHKVTSGQVVCVPHEAGECCAITLGG</sequence>
<accession>Q6UP17</accession>
<comment type="function">
    <molecule>Capsid protein VP2</molecule>
    <text evidence="1">Capsid protein that assembles with the capsid proteins VP1 and VP3 to form a pseudo-T3 icosahedral capsid of about 40 nm.</text>
</comment>
<comment type="function">
    <molecule>Helicase</molecule>
    <text evidence="15">Displays RNA helix destabilizing and strand annealing acceleration activity. This activity is necessary at several points during genome replication, for example to separate duplexes that form after genome replication.</text>
</comment>
<comment type="function">
    <molecule>3C-like protease</molecule>
    <text evidence="8">Cysteine protease that generates mature viral proteins from the precursor polyprotein.</text>
</comment>
<comment type="function">
    <molecule>RNA-directed RNA polymerase</molecule>
    <text evidence="7">Replicates genomic and antigenomic RNA.</text>
</comment>
<comment type="catalytic activity">
    <molecule>RNA-directed RNA polymerase</molecule>
    <reaction evidence="3 7">
        <text>RNA(n) + a ribonucleoside 5'-triphosphate = RNA(n+1) + diphosphate</text>
        <dbReference type="Rhea" id="RHEA:21248"/>
        <dbReference type="Rhea" id="RHEA-COMP:14527"/>
        <dbReference type="Rhea" id="RHEA-COMP:17342"/>
        <dbReference type="ChEBI" id="CHEBI:33019"/>
        <dbReference type="ChEBI" id="CHEBI:61557"/>
        <dbReference type="ChEBI" id="CHEBI:140395"/>
        <dbReference type="EC" id="2.7.7.48"/>
    </reaction>
</comment>
<comment type="catalytic activity">
    <molecule>Helicase</molecule>
    <reaction evidence="9">
        <text>ATP + H2O = ADP + phosphate + H(+)</text>
        <dbReference type="Rhea" id="RHEA:13065"/>
        <dbReference type="ChEBI" id="CHEBI:15377"/>
        <dbReference type="ChEBI" id="CHEBI:15378"/>
        <dbReference type="ChEBI" id="CHEBI:30616"/>
        <dbReference type="ChEBI" id="CHEBI:43474"/>
        <dbReference type="ChEBI" id="CHEBI:456216"/>
        <dbReference type="EC" id="3.6.4.13"/>
    </reaction>
</comment>
<comment type="activity regulation">
    <molecule>3C-like protease</molecule>
    <text evidence="8">Inhibited by p-chloromercuribenzenesulfonate (PCMBS). Almost completely inhibited by methyl methanethiosulfonate (MMTS), and N-ethylmaleimide (NEM).</text>
</comment>
<comment type="biophysicochemical properties">
    <phDependence>
        <text evidence="8">Optimum pH is 7.5 for 3C-like protease.</text>
    </phDependence>
    <temperatureDependence>
        <text evidence="8">Optimum temperature is 22 degrees Celsius.</text>
    </temperatureDependence>
</comment>
<comment type="subcellular location">
    <molecule>Capsid protein VP2</molecule>
    <subcellularLocation>
        <location evidence="1">Virion</location>
    </subcellularLocation>
</comment>
<comment type="PTM">
    <molecule>Genome polyprotein</molecule>
    <text evidence="1">Specific enzymatic cleavages in vivo by the viral 3C-like protease yield three mature proteins (By similarity). 3C-like protease is cleaved autocatalytically (By similarity).</text>
</comment>
<name>POLG_EOPV</name>
<dbReference type="EC" id="3.6.4.13" evidence="9"/>
<dbReference type="EC" id="3.4.22.-" evidence="8"/>
<dbReference type="EC" id="2.7.7.48" evidence="7"/>
<dbReference type="EMBL" id="AY365064">
    <property type="protein sequence ID" value="AAQ64627.1"/>
    <property type="molecule type" value="Genomic_RNA"/>
</dbReference>
<dbReference type="RefSeq" id="NP_919029.1">
    <property type="nucleotide sequence ID" value="NC_005092.1"/>
</dbReference>
<dbReference type="MEROPS" id="C99.001"/>
<dbReference type="GeneID" id="2943317"/>
<dbReference type="KEGG" id="vg:2943317"/>
<dbReference type="Proteomes" id="UP000201482">
    <property type="component" value="Segment"/>
</dbReference>
<dbReference type="GO" id="GO:0019028">
    <property type="term" value="C:viral capsid"/>
    <property type="evidence" value="ECO:0007669"/>
    <property type="project" value="UniProtKB-KW"/>
</dbReference>
<dbReference type="GO" id="GO:0005524">
    <property type="term" value="F:ATP binding"/>
    <property type="evidence" value="ECO:0007669"/>
    <property type="project" value="UniProtKB-KW"/>
</dbReference>
<dbReference type="GO" id="GO:0016887">
    <property type="term" value="F:ATP hydrolysis activity"/>
    <property type="evidence" value="ECO:0007669"/>
    <property type="project" value="RHEA"/>
</dbReference>
<dbReference type="GO" id="GO:0004197">
    <property type="term" value="F:cysteine-type endopeptidase activity"/>
    <property type="evidence" value="ECO:0007669"/>
    <property type="project" value="InterPro"/>
</dbReference>
<dbReference type="GO" id="GO:0003723">
    <property type="term" value="F:RNA binding"/>
    <property type="evidence" value="ECO:0007669"/>
    <property type="project" value="InterPro"/>
</dbReference>
<dbReference type="GO" id="GO:0003724">
    <property type="term" value="F:RNA helicase activity"/>
    <property type="evidence" value="ECO:0007669"/>
    <property type="project" value="UniProtKB-EC"/>
</dbReference>
<dbReference type="GO" id="GO:0003968">
    <property type="term" value="F:RNA-directed RNA polymerase activity"/>
    <property type="evidence" value="ECO:0007669"/>
    <property type="project" value="UniProtKB-KW"/>
</dbReference>
<dbReference type="GO" id="GO:0006351">
    <property type="term" value="P:DNA-templated transcription"/>
    <property type="evidence" value="ECO:0007669"/>
    <property type="project" value="InterPro"/>
</dbReference>
<dbReference type="GO" id="GO:0006508">
    <property type="term" value="P:proteolysis"/>
    <property type="evidence" value="ECO:0007669"/>
    <property type="project" value="UniProtKB-KW"/>
</dbReference>
<dbReference type="CDD" id="cd23171">
    <property type="entry name" value="ps-ssRNAv_EoPV-like_RdRp"/>
    <property type="match status" value="1"/>
</dbReference>
<dbReference type="CDD" id="cd00205">
    <property type="entry name" value="rhv_like"/>
    <property type="match status" value="2"/>
</dbReference>
<dbReference type="Gene3D" id="2.60.120.20">
    <property type="match status" value="2"/>
</dbReference>
<dbReference type="Gene3D" id="3.30.70.270">
    <property type="match status" value="1"/>
</dbReference>
<dbReference type="InterPro" id="IPR043502">
    <property type="entry name" value="DNA/RNA_pol_sf"/>
</dbReference>
<dbReference type="InterPro" id="IPR000605">
    <property type="entry name" value="Helicase_SF3_ssDNA/RNA_vir"/>
</dbReference>
<dbReference type="InterPro" id="IPR014759">
    <property type="entry name" value="Helicase_SF3_ssRNA_vir"/>
</dbReference>
<dbReference type="InterPro" id="IPR044067">
    <property type="entry name" value="PCV_3C_PRO"/>
</dbReference>
<dbReference type="InterPro" id="IPR009003">
    <property type="entry name" value="Peptidase_S1_PA"/>
</dbReference>
<dbReference type="InterPro" id="IPR043128">
    <property type="entry name" value="Rev_trsase/Diguanyl_cyclase"/>
</dbReference>
<dbReference type="InterPro" id="IPR033703">
    <property type="entry name" value="Rhv-like"/>
</dbReference>
<dbReference type="InterPro" id="IPR001205">
    <property type="entry name" value="RNA-dir_pol_C"/>
</dbReference>
<dbReference type="InterPro" id="IPR029053">
    <property type="entry name" value="Viral_coat"/>
</dbReference>
<dbReference type="Pfam" id="PF00680">
    <property type="entry name" value="RdRP_1"/>
    <property type="match status" value="1"/>
</dbReference>
<dbReference type="Pfam" id="PF00910">
    <property type="entry name" value="RNA_helicase"/>
    <property type="match status" value="1"/>
</dbReference>
<dbReference type="SUPFAM" id="SSF56672">
    <property type="entry name" value="DNA/RNA polymerases"/>
    <property type="match status" value="1"/>
</dbReference>
<dbReference type="SUPFAM" id="SSF88633">
    <property type="entry name" value="Positive stranded ssRNA viruses"/>
    <property type="match status" value="2"/>
</dbReference>
<dbReference type="SUPFAM" id="SSF50494">
    <property type="entry name" value="Trypsin-like serine proteases"/>
    <property type="match status" value="1"/>
</dbReference>
<dbReference type="PROSITE" id="PS51874">
    <property type="entry name" value="PCV_3C_PRO"/>
    <property type="match status" value="1"/>
</dbReference>
<dbReference type="PROSITE" id="PS51218">
    <property type="entry name" value="SF3_HELICASE_2"/>
    <property type="match status" value="1"/>
</dbReference>
<feature type="chain" id="PRO_0000442451" description="Genome polyprotein">
    <location>
        <begin position="1"/>
        <end position="2987"/>
    </location>
</feature>
<feature type="chain" id="PRO_0000460695" description="Putative leader protein">
    <location>
        <begin position="1"/>
        <end status="unknown"/>
    </location>
</feature>
<feature type="chain" id="PRO_0000460696" description="Capsid protein VP2">
    <location>
        <begin status="unknown"/>
        <end position="545"/>
    </location>
</feature>
<feature type="chain" id="PRO_0000460697" description="Putative protein 2A-like 1">
    <location>
        <begin position="546"/>
        <end position="574"/>
    </location>
</feature>
<feature type="chain" id="PRO_0000460698" description="Putative capsid protein VP4">
    <location>
        <begin position="575"/>
        <end status="unknown"/>
    </location>
</feature>
<feature type="chain" id="PRO_0000460699" description="Putative protein 2A-like 2">
    <location>
        <begin position="1163"/>
        <end position="1191"/>
    </location>
</feature>
<feature type="chain" id="PRO_0000442452" description="Helicase">
    <location>
        <begin position="1192"/>
        <end position="2193"/>
    </location>
</feature>
<feature type="chain" id="PRO_0000442453" description="3C-like protease">
    <location>
        <begin position="2194"/>
        <end position="2492"/>
    </location>
</feature>
<feature type="chain" id="PRO_0000442454" description="RNA-directed RNA polymerase">
    <location>
        <begin position="2493"/>
        <end position="2987"/>
    </location>
</feature>
<feature type="domain" description="SF3 helicase" evidence="4">
    <location>
        <begin position="1526"/>
        <end position="1697"/>
    </location>
</feature>
<feature type="domain" description="Peptidase C3" evidence="5">
    <location>
        <begin position="2222"/>
        <end position="2417"/>
    </location>
</feature>
<feature type="region of interest" description="Disordered" evidence="6">
    <location>
        <begin position="1159"/>
        <end position="1212"/>
    </location>
</feature>
<feature type="coiled-coil region" evidence="2">
    <location>
        <begin position="1279"/>
        <end position="1310"/>
    </location>
</feature>
<feature type="coiled-coil region" evidence="2">
    <location>
        <begin position="1788"/>
        <end position="1815"/>
    </location>
</feature>
<feature type="active site" description="For picornain 3C-like protease activity" evidence="5 8">
    <location>
        <position position="2261"/>
    </location>
</feature>
<feature type="active site" description="For picornain 3C-like protease activity" evidence="5 8">
    <location>
        <position position="2299"/>
    </location>
</feature>
<feature type="active site" description="For picornain 3C-like protease activity" evidence="5 8">
    <location>
        <position position="2383"/>
    </location>
</feature>
<feature type="binding site" evidence="4">
    <location>
        <begin position="1553"/>
        <end position="1560"/>
    </location>
    <ligand>
        <name>ATP</name>
        <dbReference type="ChEBI" id="CHEBI:30616"/>
    </ligand>
</feature>
<feature type="site" description="Cleavage; by ribosomal skip" evidence="14">
    <location>
        <begin position="574"/>
        <end position="575"/>
    </location>
</feature>
<feature type="site" description="Cleavage; by ribosomal skip" evidence="14">
    <location>
        <begin position="1191"/>
        <end position="1192"/>
    </location>
</feature>
<feature type="site" description="Cleavage; by autolysis" evidence="8">
    <location>
        <begin position="2193"/>
        <end position="2194"/>
    </location>
</feature>
<feature type="site" description="Cleavage; by autolysis" evidence="8">
    <location>
        <begin position="2492"/>
        <end position="2493"/>
    </location>
</feature>
<feature type="mutagenesis site" description="Complete loss of 3C-like protease activity." evidence="8">
    <original>H</original>
    <variation>A</variation>
    <location>
        <position position="2261"/>
    </location>
</feature>
<feature type="mutagenesis site" description="Almost complete loss of 3C-like protease activity." evidence="8">
    <original>D</original>
    <variation>A</variation>
    <location>
        <position position="2299"/>
    </location>
</feature>
<feature type="mutagenesis site" description="Partial loss of 3C-like protease activity." evidence="8">
    <original>C</original>
    <variation>A</variation>
    <location>
        <position position="2383"/>
    </location>
</feature>
<organism>
    <name type="scientific">Ectropis obliqua picorna-like virus</name>
    <name type="common">EoPV</name>
    <dbReference type="NCBI Taxonomy" id="240555"/>
    <lineage>
        <taxon>Viruses</taxon>
        <taxon>Riboviria</taxon>
        <taxon>Orthornavirae</taxon>
        <taxon>Pisuviricota</taxon>
        <taxon>Pisoniviricetes</taxon>
        <taxon>Picornavirales</taxon>
        <taxon>Iflaviridae</taxon>
        <taxon>Iflavirus</taxon>
        <taxon>Iflavirus ectobliquae</taxon>
    </lineage>
</organism>
<evidence type="ECO:0000250" key="1">
    <source>
        <dbReference type="UniProtKB" id="Q8B3M2"/>
    </source>
</evidence>
<evidence type="ECO:0000255" key="2"/>
<evidence type="ECO:0000255" key="3">
    <source>
        <dbReference type="PROSITE-ProRule" id="PRU00539"/>
    </source>
</evidence>
<evidence type="ECO:0000255" key="4">
    <source>
        <dbReference type="PROSITE-ProRule" id="PRU00551"/>
    </source>
</evidence>
<evidence type="ECO:0000255" key="5">
    <source>
        <dbReference type="PROSITE-ProRule" id="PRU01222"/>
    </source>
</evidence>
<evidence type="ECO:0000256" key="6">
    <source>
        <dbReference type="SAM" id="MobiDB-lite"/>
    </source>
</evidence>
<evidence type="ECO:0000269" key="7">
    <source>
    </source>
</evidence>
<evidence type="ECO:0000269" key="8">
    <source>
    </source>
</evidence>
<evidence type="ECO:0000269" key="9">
    <source>
    </source>
</evidence>
<evidence type="ECO:0000303" key="10">
    <source>
    </source>
</evidence>
<evidence type="ECO:0000303" key="11">
    <source>
    </source>
</evidence>
<evidence type="ECO:0000303" key="12">
    <source>
    </source>
</evidence>
<evidence type="ECO:0000305" key="13"/>
<evidence type="ECO:0000305" key="14">
    <source>
    </source>
</evidence>
<evidence type="ECO:0000305" key="15">
    <source>
    </source>
</evidence>
<protein>
    <recommendedName>
        <fullName>Genome polyprotein</fullName>
    </recommendedName>
    <component>
        <recommendedName>
            <fullName>Putative leader protein</fullName>
            <shortName>L-protein</shortName>
        </recommendedName>
    </component>
    <component>
        <recommendedName>
            <fullName>Capsid protein VP2</fullName>
        </recommendedName>
    </component>
    <component>
        <recommendedName>
            <fullName evidence="13">Putative capsid protein VP4</fullName>
        </recommendedName>
    </component>
    <component>
        <recommendedName>
            <fullName evidence="10">Putative protein 2A-like 1</fullName>
        </recommendedName>
    </component>
    <component>
        <recommendedName>
            <fullName evidence="10">Putative protein 2A-like 2</fullName>
        </recommendedName>
    </component>
    <component>
        <recommendedName>
            <fullName evidence="12">Helicase</fullName>
            <ecNumber evidence="9">3.6.4.13</ecNumber>
        </recommendedName>
    </component>
    <component>
        <recommendedName>
            <fullName evidence="11">3C-like protease</fullName>
            <shortName>3CL-PRO</shortName>
            <ecNumber evidence="8">3.4.22.-</ecNumber>
        </recommendedName>
    </component>
    <component>
        <recommendedName>
            <fullName>RNA-directed RNA polymerase</fullName>
            <ecNumber evidence="7">2.7.7.48</ecNumber>
        </recommendedName>
    </component>
</protein>